<dbReference type="EC" id="6.5.1.2" evidence="1"/>
<dbReference type="EMBL" id="CP001145">
    <property type="protein sequence ID" value="ACI17456.1"/>
    <property type="molecule type" value="Genomic_DNA"/>
</dbReference>
<dbReference type="RefSeq" id="WP_012544108.1">
    <property type="nucleotide sequence ID" value="NC_011295.1"/>
</dbReference>
<dbReference type="SMR" id="B5Y6V5"/>
<dbReference type="STRING" id="309798.COPRO5265_0132"/>
<dbReference type="KEGG" id="cpo:COPRO5265_0132"/>
<dbReference type="eggNOG" id="COG0272">
    <property type="taxonomic scope" value="Bacteria"/>
</dbReference>
<dbReference type="HOGENOM" id="CLU_007764_2_1_9"/>
<dbReference type="OrthoDB" id="9759736at2"/>
<dbReference type="Proteomes" id="UP000001732">
    <property type="component" value="Chromosome"/>
</dbReference>
<dbReference type="GO" id="GO:0005829">
    <property type="term" value="C:cytosol"/>
    <property type="evidence" value="ECO:0007669"/>
    <property type="project" value="TreeGrafter"/>
</dbReference>
<dbReference type="GO" id="GO:0003677">
    <property type="term" value="F:DNA binding"/>
    <property type="evidence" value="ECO:0007669"/>
    <property type="project" value="InterPro"/>
</dbReference>
<dbReference type="GO" id="GO:0003911">
    <property type="term" value="F:DNA ligase (NAD+) activity"/>
    <property type="evidence" value="ECO:0007669"/>
    <property type="project" value="UniProtKB-UniRule"/>
</dbReference>
<dbReference type="GO" id="GO:0046872">
    <property type="term" value="F:metal ion binding"/>
    <property type="evidence" value="ECO:0007669"/>
    <property type="project" value="UniProtKB-KW"/>
</dbReference>
<dbReference type="GO" id="GO:0006281">
    <property type="term" value="P:DNA repair"/>
    <property type="evidence" value="ECO:0007669"/>
    <property type="project" value="UniProtKB-KW"/>
</dbReference>
<dbReference type="GO" id="GO:0006260">
    <property type="term" value="P:DNA replication"/>
    <property type="evidence" value="ECO:0007669"/>
    <property type="project" value="UniProtKB-KW"/>
</dbReference>
<dbReference type="CDD" id="cd17748">
    <property type="entry name" value="BRCT_DNA_ligase_like"/>
    <property type="match status" value="1"/>
</dbReference>
<dbReference type="CDD" id="cd00114">
    <property type="entry name" value="LIGANc"/>
    <property type="match status" value="1"/>
</dbReference>
<dbReference type="FunFam" id="1.10.150.20:FF:000007">
    <property type="entry name" value="DNA ligase"/>
    <property type="match status" value="1"/>
</dbReference>
<dbReference type="FunFam" id="1.10.287.610:FF:000002">
    <property type="entry name" value="DNA ligase"/>
    <property type="match status" value="1"/>
</dbReference>
<dbReference type="FunFam" id="2.40.50.140:FF:000012">
    <property type="entry name" value="DNA ligase"/>
    <property type="match status" value="1"/>
</dbReference>
<dbReference type="FunFam" id="3.30.470.30:FF:000001">
    <property type="entry name" value="DNA ligase"/>
    <property type="match status" value="1"/>
</dbReference>
<dbReference type="Gene3D" id="6.20.10.30">
    <property type="match status" value="1"/>
</dbReference>
<dbReference type="Gene3D" id="1.10.150.20">
    <property type="entry name" value="5' to 3' exonuclease, C-terminal subdomain"/>
    <property type="match status" value="2"/>
</dbReference>
<dbReference type="Gene3D" id="3.40.50.10190">
    <property type="entry name" value="BRCT domain"/>
    <property type="match status" value="1"/>
</dbReference>
<dbReference type="Gene3D" id="3.30.470.30">
    <property type="entry name" value="DNA ligase/mRNA capping enzyme"/>
    <property type="match status" value="1"/>
</dbReference>
<dbReference type="Gene3D" id="1.10.287.610">
    <property type="entry name" value="Helix hairpin bin"/>
    <property type="match status" value="1"/>
</dbReference>
<dbReference type="Gene3D" id="2.40.50.140">
    <property type="entry name" value="Nucleic acid-binding proteins"/>
    <property type="match status" value="1"/>
</dbReference>
<dbReference type="HAMAP" id="MF_01588">
    <property type="entry name" value="DNA_ligase_A"/>
    <property type="match status" value="1"/>
</dbReference>
<dbReference type="InterPro" id="IPR001357">
    <property type="entry name" value="BRCT_dom"/>
</dbReference>
<dbReference type="InterPro" id="IPR036420">
    <property type="entry name" value="BRCT_dom_sf"/>
</dbReference>
<dbReference type="InterPro" id="IPR041663">
    <property type="entry name" value="DisA/LigA_HHH"/>
</dbReference>
<dbReference type="InterPro" id="IPR001679">
    <property type="entry name" value="DNA_ligase"/>
</dbReference>
<dbReference type="InterPro" id="IPR018239">
    <property type="entry name" value="DNA_ligase_AS"/>
</dbReference>
<dbReference type="InterPro" id="IPR033136">
    <property type="entry name" value="DNA_ligase_CS"/>
</dbReference>
<dbReference type="InterPro" id="IPR013839">
    <property type="entry name" value="DNAligase_adenylation"/>
</dbReference>
<dbReference type="InterPro" id="IPR013840">
    <property type="entry name" value="DNAligase_N"/>
</dbReference>
<dbReference type="InterPro" id="IPR003583">
    <property type="entry name" value="Hlx-hairpin-Hlx_DNA-bd_motif"/>
</dbReference>
<dbReference type="InterPro" id="IPR012340">
    <property type="entry name" value="NA-bd_OB-fold"/>
</dbReference>
<dbReference type="InterPro" id="IPR004150">
    <property type="entry name" value="NAD_DNA_ligase_OB"/>
</dbReference>
<dbReference type="InterPro" id="IPR010994">
    <property type="entry name" value="RuvA_2-like"/>
</dbReference>
<dbReference type="NCBIfam" id="TIGR00575">
    <property type="entry name" value="dnlj"/>
    <property type="match status" value="1"/>
</dbReference>
<dbReference type="NCBIfam" id="NF005932">
    <property type="entry name" value="PRK07956.1"/>
    <property type="match status" value="1"/>
</dbReference>
<dbReference type="PANTHER" id="PTHR23389">
    <property type="entry name" value="CHROMOSOME TRANSMISSION FIDELITY FACTOR 18"/>
    <property type="match status" value="1"/>
</dbReference>
<dbReference type="PANTHER" id="PTHR23389:SF9">
    <property type="entry name" value="DNA LIGASE"/>
    <property type="match status" value="1"/>
</dbReference>
<dbReference type="Pfam" id="PF00533">
    <property type="entry name" value="BRCT"/>
    <property type="match status" value="1"/>
</dbReference>
<dbReference type="Pfam" id="PF01653">
    <property type="entry name" value="DNA_ligase_aden"/>
    <property type="match status" value="1"/>
</dbReference>
<dbReference type="Pfam" id="PF03120">
    <property type="entry name" value="DNA_ligase_OB"/>
    <property type="match status" value="1"/>
</dbReference>
<dbReference type="Pfam" id="PF12826">
    <property type="entry name" value="HHH_2"/>
    <property type="match status" value="1"/>
</dbReference>
<dbReference type="Pfam" id="PF14520">
    <property type="entry name" value="HHH_5"/>
    <property type="match status" value="1"/>
</dbReference>
<dbReference type="Pfam" id="PF22745">
    <property type="entry name" value="Nlig-Ia"/>
    <property type="match status" value="1"/>
</dbReference>
<dbReference type="PIRSF" id="PIRSF001604">
    <property type="entry name" value="LigA"/>
    <property type="match status" value="1"/>
</dbReference>
<dbReference type="SMART" id="SM00292">
    <property type="entry name" value="BRCT"/>
    <property type="match status" value="1"/>
</dbReference>
<dbReference type="SMART" id="SM00278">
    <property type="entry name" value="HhH1"/>
    <property type="match status" value="4"/>
</dbReference>
<dbReference type="SMART" id="SM00532">
    <property type="entry name" value="LIGANc"/>
    <property type="match status" value="1"/>
</dbReference>
<dbReference type="SUPFAM" id="SSF52113">
    <property type="entry name" value="BRCT domain"/>
    <property type="match status" value="1"/>
</dbReference>
<dbReference type="SUPFAM" id="SSF56091">
    <property type="entry name" value="DNA ligase/mRNA capping enzyme, catalytic domain"/>
    <property type="match status" value="1"/>
</dbReference>
<dbReference type="SUPFAM" id="SSF50249">
    <property type="entry name" value="Nucleic acid-binding proteins"/>
    <property type="match status" value="1"/>
</dbReference>
<dbReference type="SUPFAM" id="SSF47781">
    <property type="entry name" value="RuvA domain 2-like"/>
    <property type="match status" value="1"/>
</dbReference>
<dbReference type="PROSITE" id="PS50172">
    <property type="entry name" value="BRCT"/>
    <property type="match status" value="1"/>
</dbReference>
<dbReference type="PROSITE" id="PS01055">
    <property type="entry name" value="DNA_LIGASE_N1"/>
    <property type="match status" value="1"/>
</dbReference>
<dbReference type="PROSITE" id="PS01056">
    <property type="entry name" value="DNA_LIGASE_N2"/>
    <property type="match status" value="1"/>
</dbReference>
<comment type="function">
    <text evidence="1">DNA ligase that catalyzes the formation of phosphodiester linkages between 5'-phosphoryl and 3'-hydroxyl groups in double-stranded DNA using NAD as a coenzyme and as the energy source for the reaction. It is essential for DNA replication and repair of damaged DNA.</text>
</comment>
<comment type="catalytic activity">
    <reaction evidence="1">
        <text>NAD(+) + (deoxyribonucleotide)n-3'-hydroxyl + 5'-phospho-(deoxyribonucleotide)m = (deoxyribonucleotide)n+m + AMP + beta-nicotinamide D-nucleotide.</text>
        <dbReference type="EC" id="6.5.1.2"/>
    </reaction>
</comment>
<comment type="cofactor">
    <cofactor evidence="1">
        <name>Mg(2+)</name>
        <dbReference type="ChEBI" id="CHEBI:18420"/>
    </cofactor>
    <cofactor evidence="1">
        <name>Mn(2+)</name>
        <dbReference type="ChEBI" id="CHEBI:29035"/>
    </cofactor>
</comment>
<comment type="similarity">
    <text evidence="1">Belongs to the NAD-dependent DNA ligase family. LigA subfamily.</text>
</comment>
<name>DNLJ_COPPD</name>
<accession>B5Y6V5</accession>
<feature type="chain" id="PRO_0000380347" description="DNA ligase">
    <location>
        <begin position="1"/>
        <end position="666"/>
    </location>
</feature>
<feature type="domain" description="BRCT" evidence="1">
    <location>
        <begin position="584"/>
        <end position="666"/>
    </location>
</feature>
<feature type="active site" description="N6-AMP-lysine intermediate" evidence="1">
    <location>
        <position position="116"/>
    </location>
</feature>
<feature type="binding site" evidence="1">
    <location>
        <begin position="34"/>
        <end position="38"/>
    </location>
    <ligand>
        <name>NAD(+)</name>
        <dbReference type="ChEBI" id="CHEBI:57540"/>
    </ligand>
</feature>
<feature type="binding site" evidence="1">
    <location>
        <begin position="83"/>
        <end position="84"/>
    </location>
    <ligand>
        <name>NAD(+)</name>
        <dbReference type="ChEBI" id="CHEBI:57540"/>
    </ligand>
</feature>
<feature type="binding site" evidence="1">
    <location>
        <position position="114"/>
    </location>
    <ligand>
        <name>NAD(+)</name>
        <dbReference type="ChEBI" id="CHEBI:57540"/>
    </ligand>
</feature>
<feature type="binding site" evidence="1">
    <location>
        <position position="137"/>
    </location>
    <ligand>
        <name>NAD(+)</name>
        <dbReference type="ChEBI" id="CHEBI:57540"/>
    </ligand>
</feature>
<feature type="binding site" evidence="1">
    <location>
        <position position="174"/>
    </location>
    <ligand>
        <name>NAD(+)</name>
        <dbReference type="ChEBI" id="CHEBI:57540"/>
    </ligand>
</feature>
<feature type="binding site" evidence="1">
    <location>
        <position position="290"/>
    </location>
    <ligand>
        <name>NAD(+)</name>
        <dbReference type="ChEBI" id="CHEBI:57540"/>
    </ligand>
</feature>
<feature type="binding site" evidence="1">
    <location>
        <position position="314"/>
    </location>
    <ligand>
        <name>NAD(+)</name>
        <dbReference type="ChEBI" id="CHEBI:57540"/>
    </ligand>
</feature>
<feature type="binding site" evidence="1">
    <location>
        <position position="408"/>
    </location>
    <ligand>
        <name>Zn(2+)</name>
        <dbReference type="ChEBI" id="CHEBI:29105"/>
    </ligand>
</feature>
<feature type="binding site" evidence="1">
    <location>
        <position position="411"/>
    </location>
    <ligand>
        <name>Zn(2+)</name>
        <dbReference type="ChEBI" id="CHEBI:29105"/>
    </ligand>
</feature>
<feature type="binding site" evidence="1">
    <location>
        <position position="424"/>
    </location>
    <ligand>
        <name>Zn(2+)</name>
        <dbReference type="ChEBI" id="CHEBI:29105"/>
    </ligand>
</feature>
<feature type="binding site" evidence="1">
    <location>
        <position position="429"/>
    </location>
    <ligand>
        <name>Zn(2+)</name>
        <dbReference type="ChEBI" id="CHEBI:29105"/>
    </ligand>
</feature>
<evidence type="ECO:0000255" key="1">
    <source>
        <dbReference type="HAMAP-Rule" id="MF_01588"/>
    </source>
</evidence>
<gene>
    <name evidence="1" type="primary">ligA</name>
    <name type="ordered locus">COPRO5265_0132</name>
</gene>
<reference key="1">
    <citation type="submission" date="2008-08" db="EMBL/GenBank/DDBJ databases">
        <title>The complete genome sequence of Coprothermobacter proteolyticus strain ATCC 5245 / DSM 5265 / BT.</title>
        <authorList>
            <person name="Dodson R.J."/>
            <person name="Durkin A.S."/>
            <person name="Wu M."/>
            <person name="Eisen J."/>
            <person name="Sutton G."/>
        </authorList>
    </citation>
    <scope>NUCLEOTIDE SEQUENCE [LARGE SCALE GENOMIC DNA]</scope>
    <source>
        <strain>ATCC 35245 / DSM 5265 / OCM 4 / BT</strain>
    </source>
</reference>
<organism>
    <name type="scientific">Coprothermobacter proteolyticus (strain ATCC 35245 / DSM 5265 / OCM 4 / BT)</name>
    <dbReference type="NCBI Taxonomy" id="309798"/>
    <lineage>
        <taxon>Bacteria</taxon>
        <taxon>Pseudomonadati</taxon>
        <taxon>Coprothermobacterota</taxon>
        <taxon>Coprothermobacteria</taxon>
        <taxon>Coprothermobacterales</taxon>
        <taxon>Coprothermobacteraceae</taxon>
        <taxon>Coprothermobacter</taxon>
    </lineage>
</organism>
<protein>
    <recommendedName>
        <fullName evidence="1">DNA ligase</fullName>
        <ecNumber evidence="1">6.5.1.2</ecNumber>
    </recommendedName>
    <alternativeName>
        <fullName evidence="1">Polydeoxyribonucleotide synthase [NAD(+)]</fullName>
    </alternativeName>
</protein>
<sequence length="666" mass="74776">MTREEAKKRIERLRELIEYHNYRYYVLDSPEISDEEYDKLYRELVTLEKQFPEFITPDSPTQRVGAPPAKEFATVTHEVPMLSLDNAFTEDEIKAFDQRVRSALNQQHVEYFCEHKLDGLAVSLLYENGLFVRGSTRGNGYVGEDVTANLKTIKTIPLRLKGENIPPVVEIRGEAFMMLRDFEALNEQRQALGQPLFANPRNAAAGSIRQLDSSITAQRKLYFMPYGFGLVQGMDFETQERFLKQCQEWGFRINEHNRKASSIEEALEFIRYWTEHRVELPFPADGVVIKVNNLRYWDILGTTAHAPRYAIAYKFPAEEKETKLKDVVFQVGRTGIITPVAMLEPVVLDGATVSRATLHNFDIVRQLDVRKGDVVKLKRAGMVIPEIIGVAAEKRTGKEEQIEPPTTCPVCGGPTEWDGAYLKCVNITCPAQLKGHLLHWASRDAMDIDGLGESIIENLVDMGLVKNIADLYKLSVQDLLTLPRLAQRSATKLYENIQRSKDRPFFRVLYGLGIPRVGLKTAQMLAEHFGSINALLNATMDELTSIEGIGTDTAETILKALQSPQVHELIDQLKTLGLKMEQESIEGPLKGLTFVFTGTLTSMSRGDAAKLVQSLGGKVASSVSKNVDYVVVGEDPGSKLDKAQKLGLTIIDEEAFLKMVKREHNG</sequence>
<keyword id="KW-0227">DNA damage</keyword>
<keyword id="KW-0234">DNA repair</keyword>
<keyword id="KW-0235">DNA replication</keyword>
<keyword id="KW-0436">Ligase</keyword>
<keyword id="KW-0460">Magnesium</keyword>
<keyword id="KW-0464">Manganese</keyword>
<keyword id="KW-0479">Metal-binding</keyword>
<keyword id="KW-0520">NAD</keyword>
<keyword id="KW-1185">Reference proteome</keyword>
<keyword id="KW-0862">Zinc</keyword>
<proteinExistence type="inferred from homology"/>